<keyword id="KW-1185">Reference proteome</keyword>
<keyword id="KW-0833">Ubl conjugation pathway</keyword>
<proteinExistence type="evidence at transcript level"/>
<accession>Q680K8</accession>
<accession>Q9LFZ6</accession>
<sequence>MTDSAYRVDTISRLAQWRIHNLSSSTYRKSDPFKMGLWNWHLSVEKSKMLLNVKLYPEVSNLTRENPPVASFALRVVSSTGERKALSHPEVIDKRIKTNEDFIWTIEVPLTGKIIIDVEFLDLKVLSQDSGELYSIWANGSTENQSQVTAVTSLGRMLTESIYTDITINASDGSIGAHRAVLAARSPVFRSMFLHDLKEKELSEINVLDMPLDACQAFLSYIYGNIQNEDFLIHRLALLQAAEKYDIADLKEACHLSLLDDIDTKNVLERLQNAYLYQLPELKASCMRYLVKFGKIFEIRDEFNIFMQCADRDLISEIFHEVLSTWKGF</sequence>
<organism>
    <name type="scientific">Arabidopsis thaliana</name>
    <name type="common">Mouse-ear cress</name>
    <dbReference type="NCBI Taxonomy" id="3702"/>
    <lineage>
        <taxon>Eukaryota</taxon>
        <taxon>Viridiplantae</taxon>
        <taxon>Streptophyta</taxon>
        <taxon>Embryophyta</taxon>
        <taxon>Tracheophyta</taxon>
        <taxon>Spermatophyta</taxon>
        <taxon>Magnoliopsida</taxon>
        <taxon>eudicotyledons</taxon>
        <taxon>Gunneridae</taxon>
        <taxon>Pentapetalae</taxon>
        <taxon>rosids</taxon>
        <taxon>malvids</taxon>
        <taxon>Brassicales</taxon>
        <taxon>Brassicaceae</taxon>
        <taxon>Camelineae</taxon>
        <taxon>Arabidopsis</taxon>
    </lineage>
</organism>
<dbReference type="EMBL" id="AC002328">
    <property type="protein sequence ID" value="AAF79503.1"/>
    <property type="status" value="ALT_SEQ"/>
    <property type="molecule type" value="Genomic_DNA"/>
</dbReference>
<dbReference type="EMBL" id="CP002684">
    <property type="protein sequence ID" value="AEE33294.1"/>
    <property type="molecule type" value="Genomic_DNA"/>
</dbReference>
<dbReference type="EMBL" id="AK175625">
    <property type="protein sequence ID" value="BAD43388.1"/>
    <property type="molecule type" value="mRNA"/>
</dbReference>
<dbReference type="EMBL" id="AK175859">
    <property type="protein sequence ID" value="BAD43622.1"/>
    <property type="molecule type" value="mRNA"/>
</dbReference>
<dbReference type="EMBL" id="BT022097">
    <property type="protein sequence ID" value="AAY34158.1"/>
    <property type="molecule type" value="mRNA"/>
</dbReference>
<dbReference type="RefSeq" id="NP_175972.1">
    <property type="nucleotide sequence ID" value="NM_104452.4"/>
</dbReference>
<dbReference type="SMR" id="Q680K8"/>
<dbReference type="BioGRID" id="27250">
    <property type="interactions" value="1"/>
</dbReference>
<dbReference type="FunCoup" id="Q680K8">
    <property type="interactions" value="70"/>
</dbReference>
<dbReference type="IntAct" id="Q680K8">
    <property type="interactions" value="1"/>
</dbReference>
<dbReference type="STRING" id="3702.Q680K8"/>
<dbReference type="PaxDb" id="3702-AT1G55760.1"/>
<dbReference type="ProteomicsDB" id="243053"/>
<dbReference type="EnsemblPlants" id="AT1G55760.1">
    <property type="protein sequence ID" value="AT1G55760.1"/>
    <property type="gene ID" value="AT1G55760"/>
</dbReference>
<dbReference type="GeneID" id="842025"/>
<dbReference type="Gramene" id="AT1G55760.1">
    <property type="protein sequence ID" value="AT1G55760.1"/>
    <property type="gene ID" value="AT1G55760"/>
</dbReference>
<dbReference type="KEGG" id="ath:AT1G55760"/>
<dbReference type="Araport" id="AT1G55760"/>
<dbReference type="TAIR" id="AT1G55760">
    <property type="gene designation" value="SIBP1"/>
</dbReference>
<dbReference type="eggNOG" id="KOG1987">
    <property type="taxonomic scope" value="Eukaryota"/>
</dbReference>
<dbReference type="HOGENOM" id="CLU_061287_0_0_1"/>
<dbReference type="InParanoid" id="Q680K8"/>
<dbReference type="OMA" id="YTDIMIN"/>
<dbReference type="PhylomeDB" id="Q680K8"/>
<dbReference type="UniPathway" id="UPA00143"/>
<dbReference type="PRO" id="PR:Q680K8"/>
<dbReference type="Proteomes" id="UP000006548">
    <property type="component" value="Chromosome 1"/>
</dbReference>
<dbReference type="ExpressionAtlas" id="Q680K8">
    <property type="expression patterns" value="baseline and differential"/>
</dbReference>
<dbReference type="GO" id="GO:0005634">
    <property type="term" value="C:nucleus"/>
    <property type="evidence" value="ECO:0000314"/>
    <property type="project" value="TAIR"/>
</dbReference>
<dbReference type="GO" id="GO:0016567">
    <property type="term" value="P:protein ubiquitination"/>
    <property type="evidence" value="ECO:0007669"/>
    <property type="project" value="UniProtKB-UniPathway"/>
</dbReference>
<dbReference type="GO" id="GO:0009651">
    <property type="term" value="P:response to salt stress"/>
    <property type="evidence" value="ECO:0000315"/>
    <property type="project" value="TAIR"/>
</dbReference>
<dbReference type="CDD" id="cd14733">
    <property type="entry name" value="BACK"/>
    <property type="match status" value="1"/>
</dbReference>
<dbReference type="CDD" id="cd18186">
    <property type="entry name" value="BTB_POZ_ZBTB_KLHL-like"/>
    <property type="match status" value="1"/>
</dbReference>
<dbReference type="Gene3D" id="3.30.710.10">
    <property type="entry name" value="Potassium Channel Kv1.1, Chain A"/>
    <property type="match status" value="1"/>
</dbReference>
<dbReference type="InterPro" id="IPR044714">
    <property type="entry name" value="AtSIBP1-like"/>
</dbReference>
<dbReference type="InterPro" id="IPR000210">
    <property type="entry name" value="BTB/POZ_dom"/>
</dbReference>
<dbReference type="InterPro" id="IPR011333">
    <property type="entry name" value="SKP1/BTB/POZ_sf"/>
</dbReference>
<dbReference type="PANTHER" id="PTHR46672:SF4">
    <property type="entry name" value="OS08G0495500 PROTEIN"/>
    <property type="match status" value="1"/>
</dbReference>
<dbReference type="PANTHER" id="PTHR46672">
    <property type="entry name" value="OS08G0495500 PROTEIN-RELATED"/>
    <property type="match status" value="1"/>
</dbReference>
<dbReference type="Pfam" id="PF00651">
    <property type="entry name" value="BTB"/>
    <property type="match status" value="1"/>
</dbReference>
<dbReference type="SMART" id="SM00225">
    <property type="entry name" value="BTB"/>
    <property type="match status" value="1"/>
</dbReference>
<dbReference type="SUPFAM" id="SSF54695">
    <property type="entry name" value="POZ domain"/>
    <property type="match status" value="1"/>
</dbReference>
<dbReference type="PROSITE" id="PS50097">
    <property type="entry name" value="BTB"/>
    <property type="match status" value="1"/>
</dbReference>
<comment type="function">
    <text evidence="1">May act as a substrate-specific adapter of an E3 ubiquitin-protein ligase complex (CUL3-RBX1-BTB) which mediates the ubiquitination and subsequent proteasomal degradation of target proteins.</text>
</comment>
<comment type="pathway">
    <text>Protein modification; protein ubiquitination.</text>
</comment>
<comment type="domain">
    <text evidence="3">The BTB/POZ domain mediates the interaction with some component of ubiquitin ligase complexes.</text>
</comment>
<comment type="sequence caution" evidence="4">
    <conflict type="erroneous gene model prediction">
        <sequence resource="EMBL-CDS" id="AAF79503"/>
    </conflict>
    <text>The predicted gene has been split into 2 genes: At1g55750 and At1g55760.</text>
</comment>
<reference key="1">
    <citation type="journal article" date="2000" name="Nature">
        <title>Sequence and analysis of chromosome 1 of the plant Arabidopsis thaliana.</title>
        <authorList>
            <person name="Theologis A."/>
            <person name="Ecker J.R."/>
            <person name="Palm C.J."/>
            <person name="Federspiel N.A."/>
            <person name="Kaul S."/>
            <person name="White O."/>
            <person name="Alonso J."/>
            <person name="Altafi H."/>
            <person name="Araujo R."/>
            <person name="Bowman C.L."/>
            <person name="Brooks S.Y."/>
            <person name="Buehler E."/>
            <person name="Chan A."/>
            <person name="Chao Q."/>
            <person name="Chen H."/>
            <person name="Cheuk R.F."/>
            <person name="Chin C.W."/>
            <person name="Chung M.K."/>
            <person name="Conn L."/>
            <person name="Conway A.B."/>
            <person name="Conway A.R."/>
            <person name="Creasy T.H."/>
            <person name="Dewar K."/>
            <person name="Dunn P."/>
            <person name="Etgu P."/>
            <person name="Feldblyum T.V."/>
            <person name="Feng J.-D."/>
            <person name="Fong B."/>
            <person name="Fujii C.Y."/>
            <person name="Gill J.E."/>
            <person name="Goldsmith A.D."/>
            <person name="Haas B."/>
            <person name="Hansen N.F."/>
            <person name="Hughes B."/>
            <person name="Huizar L."/>
            <person name="Hunter J.L."/>
            <person name="Jenkins J."/>
            <person name="Johnson-Hopson C."/>
            <person name="Khan S."/>
            <person name="Khaykin E."/>
            <person name="Kim C.J."/>
            <person name="Koo H.L."/>
            <person name="Kremenetskaia I."/>
            <person name="Kurtz D.B."/>
            <person name="Kwan A."/>
            <person name="Lam B."/>
            <person name="Langin-Hooper S."/>
            <person name="Lee A."/>
            <person name="Lee J.M."/>
            <person name="Lenz C.A."/>
            <person name="Li J.H."/>
            <person name="Li Y.-P."/>
            <person name="Lin X."/>
            <person name="Liu S.X."/>
            <person name="Liu Z.A."/>
            <person name="Luros J.S."/>
            <person name="Maiti R."/>
            <person name="Marziali A."/>
            <person name="Militscher J."/>
            <person name="Miranda M."/>
            <person name="Nguyen M."/>
            <person name="Nierman W.C."/>
            <person name="Osborne B.I."/>
            <person name="Pai G."/>
            <person name="Peterson J."/>
            <person name="Pham P.K."/>
            <person name="Rizzo M."/>
            <person name="Rooney T."/>
            <person name="Rowley D."/>
            <person name="Sakano H."/>
            <person name="Salzberg S.L."/>
            <person name="Schwartz J.R."/>
            <person name="Shinn P."/>
            <person name="Southwick A.M."/>
            <person name="Sun H."/>
            <person name="Tallon L.J."/>
            <person name="Tambunga G."/>
            <person name="Toriumi M.J."/>
            <person name="Town C.D."/>
            <person name="Utterback T."/>
            <person name="Van Aken S."/>
            <person name="Vaysberg M."/>
            <person name="Vysotskaia V.S."/>
            <person name="Walker M."/>
            <person name="Wu D."/>
            <person name="Yu G."/>
            <person name="Fraser C.M."/>
            <person name="Venter J.C."/>
            <person name="Davis R.W."/>
        </authorList>
    </citation>
    <scope>NUCLEOTIDE SEQUENCE [LARGE SCALE GENOMIC DNA]</scope>
    <source>
        <strain>cv. Columbia</strain>
    </source>
</reference>
<reference key="2">
    <citation type="journal article" date="2017" name="Plant J.">
        <title>Araport11: a complete reannotation of the Arabidopsis thaliana reference genome.</title>
        <authorList>
            <person name="Cheng C.Y."/>
            <person name="Krishnakumar V."/>
            <person name="Chan A.P."/>
            <person name="Thibaud-Nissen F."/>
            <person name="Schobel S."/>
            <person name="Town C.D."/>
        </authorList>
    </citation>
    <scope>GENOME REANNOTATION</scope>
    <source>
        <strain>cv. Columbia</strain>
    </source>
</reference>
<reference key="3">
    <citation type="submission" date="2004-09" db="EMBL/GenBank/DDBJ databases">
        <title>Large-scale analysis of RIKEN Arabidopsis full-length (RAFL) cDNAs.</title>
        <authorList>
            <person name="Totoki Y."/>
            <person name="Seki M."/>
            <person name="Ishida J."/>
            <person name="Nakajima M."/>
            <person name="Enju A."/>
            <person name="Kamiya A."/>
            <person name="Narusaka M."/>
            <person name="Shin-i T."/>
            <person name="Nakagawa M."/>
            <person name="Sakamoto N."/>
            <person name="Oishi K."/>
            <person name="Kohara Y."/>
            <person name="Kobayashi M."/>
            <person name="Toyoda A."/>
            <person name="Sakaki Y."/>
            <person name="Sakurai T."/>
            <person name="Iida K."/>
            <person name="Akiyama K."/>
            <person name="Satou M."/>
            <person name="Toyoda T."/>
            <person name="Konagaya A."/>
            <person name="Carninci P."/>
            <person name="Kawai J."/>
            <person name="Hayashizaki Y."/>
            <person name="Shinozaki K."/>
        </authorList>
    </citation>
    <scope>NUCLEOTIDE SEQUENCE [LARGE SCALE MRNA]</scope>
    <source>
        <strain>cv. Columbia</strain>
    </source>
</reference>
<reference key="4">
    <citation type="submission" date="2005-05" db="EMBL/GenBank/DDBJ databases">
        <title>Arabidopsis cDNA clones.</title>
        <authorList>
            <person name="Shinn P."/>
            <person name="Chen H."/>
            <person name="Cheuk R.F."/>
            <person name="Kim C.J."/>
            <person name="Ecker J.R."/>
        </authorList>
    </citation>
    <scope>NUCLEOTIDE SEQUENCE [LARGE SCALE MRNA]</scope>
    <source>
        <strain>cv. Columbia</strain>
    </source>
</reference>
<reference key="5">
    <citation type="journal article" date="2005" name="J. Biol. Chem.">
        <title>Cullins 3a and 3b assemble with members of the broad complex/tramtrack/bric-a-brac (BTB) protein family to form essential ubiquitin-protein ligases (E3s) in Arabidopsis.</title>
        <authorList>
            <person name="Gingerich D.J."/>
            <person name="Gagne J.M."/>
            <person name="Salter D.W."/>
            <person name="Hellmann H."/>
            <person name="Estelle M."/>
            <person name="Ma L."/>
            <person name="Vierstra R.D."/>
        </authorList>
    </citation>
    <scope>DOMAIN BTB</scope>
</reference>
<gene>
    <name type="ordered locus">At1g55760</name>
    <name type="ORF">F20N2.15</name>
</gene>
<protein>
    <recommendedName>
        <fullName>BTB/POZ domain-containing protein At1g55760</fullName>
    </recommendedName>
</protein>
<evidence type="ECO:0000250" key="1"/>
<evidence type="ECO:0000255" key="2">
    <source>
        <dbReference type="PROSITE-ProRule" id="PRU00037"/>
    </source>
</evidence>
<evidence type="ECO:0000269" key="3">
    <source>
    </source>
</evidence>
<evidence type="ECO:0000305" key="4"/>
<name>Y1576_ARATH</name>
<feature type="chain" id="PRO_0000406091" description="BTB/POZ domain-containing protein At1g55760">
    <location>
        <begin position="1"/>
        <end position="329"/>
    </location>
</feature>
<feature type="domain" description="BTB" evidence="2">
    <location>
        <begin position="164"/>
        <end position="231"/>
    </location>
</feature>